<accession>C3LJ84</accession>
<reference key="1">
    <citation type="submission" date="2008-10" db="EMBL/GenBank/DDBJ databases">
        <title>Genome sequence of Bacillus anthracis str. CDC 684.</title>
        <authorList>
            <person name="Dodson R.J."/>
            <person name="Munk A.C."/>
            <person name="Brettin T."/>
            <person name="Bruce D."/>
            <person name="Detter C."/>
            <person name="Tapia R."/>
            <person name="Han C."/>
            <person name="Sutton G."/>
            <person name="Sims D."/>
        </authorList>
    </citation>
    <scope>NUCLEOTIDE SEQUENCE [LARGE SCALE GENOMIC DNA]</scope>
    <source>
        <strain>CDC 684 / NRRL 3495</strain>
    </source>
</reference>
<keyword id="KW-0687">Ribonucleoprotein</keyword>
<keyword id="KW-0689">Ribosomal protein</keyword>
<keyword id="KW-0694">RNA-binding</keyword>
<keyword id="KW-0699">rRNA-binding</keyword>
<organism>
    <name type="scientific">Bacillus anthracis (strain CDC 684 / NRRL 3495)</name>
    <dbReference type="NCBI Taxonomy" id="568206"/>
    <lineage>
        <taxon>Bacteria</taxon>
        <taxon>Bacillati</taxon>
        <taxon>Bacillota</taxon>
        <taxon>Bacilli</taxon>
        <taxon>Bacillales</taxon>
        <taxon>Bacillaceae</taxon>
        <taxon>Bacillus</taxon>
        <taxon>Bacillus cereus group</taxon>
    </lineage>
</organism>
<feature type="chain" id="PRO_1000184063" description="Large ribosomal subunit protein uL23">
    <location>
        <begin position="1"/>
        <end position="96"/>
    </location>
</feature>
<comment type="function">
    <text evidence="1">One of the early assembly proteins it binds 23S rRNA. One of the proteins that surrounds the polypeptide exit tunnel on the outside of the ribosome. Forms the main docking site for trigger factor binding to the ribosome.</text>
</comment>
<comment type="subunit">
    <text evidence="1">Part of the 50S ribosomal subunit. Contacts protein L29, and trigger factor when it is bound to the ribosome.</text>
</comment>
<comment type="similarity">
    <text evidence="1">Belongs to the universal ribosomal protein uL23 family.</text>
</comment>
<proteinExistence type="inferred from homology"/>
<protein>
    <recommendedName>
        <fullName evidence="1">Large ribosomal subunit protein uL23</fullName>
    </recommendedName>
    <alternativeName>
        <fullName evidence="2">50S ribosomal protein L23</fullName>
    </alternativeName>
</protein>
<sequence length="96" mass="11114">MRDPRDIIKRPVITERSMEMMAEKKYTFDVDVKSNKTEVKDALEAIFGVKVEKVNIMNYKPKAKRVGRHAGFTSRRRKAIVKLTADSKEIEIFQGV</sequence>
<dbReference type="EMBL" id="CP001215">
    <property type="protein sequence ID" value="ACP14510.1"/>
    <property type="molecule type" value="Genomic_DNA"/>
</dbReference>
<dbReference type="RefSeq" id="WP_001205558.1">
    <property type="nucleotide sequence ID" value="NC_012581.1"/>
</dbReference>
<dbReference type="SMR" id="C3LJ84"/>
<dbReference type="GeneID" id="93010941"/>
<dbReference type="KEGG" id="bah:BAMEG_0128"/>
<dbReference type="HOGENOM" id="CLU_037562_3_2_9"/>
<dbReference type="GO" id="GO:1990904">
    <property type="term" value="C:ribonucleoprotein complex"/>
    <property type="evidence" value="ECO:0007669"/>
    <property type="project" value="UniProtKB-KW"/>
</dbReference>
<dbReference type="GO" id="GO:0005840">
    <property type="term" value="C:ribosome"/>
    <property type="evidence" value="ECO:0007669"/>
    <property type="project" value="UniProtKB-KW"/>
</dbReference>
<dbReference type="GO" id="GO:0019843">
    <property type="term" value="F:rRNA binding"/>
    <property type="evidence" value="ECO:0007669"/>
    <property type="project" value="UniProtKB-UniRule"/>
</dbReference>
<dbReference type="GO" id="GO:0003735">
    <property type="term" value="F:structural constituent of ribosome"/>
    <property type="evidence" value="ECO:0007669"/>
    <property type="project" value="InterPro"/>
</dbReference>
<dbReference type="GO" id="GO:0006412">
    <property type="term" value="P:translation"/>
    <property type="evidence" value="ECO:0007669"/>
    <property type="project" value="UniProtKB-UniRule"/>
</dbReference>
<dbReference type="FunFam" id="3.30.70.330:FF:000001">
    <property type="entry name" value="50S ribosomal protein L23"/>
    <property type="match status" value="1"/>
</dbReference>
<dbReference type="Gene3D" id="3.30.70.330">
    <property type="match status" value="1"/>
</dbReference>
<dbReference type="HAMAP" id="MF_01369_B">
    <property type="entry name" value="Ribosomal_uL23_B"/>
    <property type="match status" value="1"/>
</dbReference>
<dbReference type="InterPro" id="IPR012677">
    <property type="entry name" value="Nucleotide-bd_a/b_plait_sf"/>
</dbReference>
<dbReference type="InterPro" id="IPR013025">
    <property type="entry name" value="Ribosomal_uL23-like"/>
</dbReference>
<dbReference type="InterPro" id="IPR012678">
    <property type="entry name" value="Ribosomal_uL23/eL15/eS24_sf"/>
</dbReference>
<dbReference type="InterPro" id="IPR001014">
    <property type="entry name" value="Ribosomal_uL23_CS"/>
</dbReference>
<dbReference type="NCBIfam" id="NF004363">
    <property type="entry name" value="PRK05738.2-4"/>
    <property type="match status" value="1"/>
</dbReference>
<dbReference type="PANTHER" id="PTHR11620">
    <property type="entry name" value="60S RIBOSOMAL PROTEIN L23A"/>
    <property type="match status" value="1"/>
</dbReference>
<dbReference type="Pfam" id="PF00276">
    <property type="entry name" value="Ribosomal_L23"/>
    <property type="match status" value="1"/>
</dbReference>
<dbReference type="SUPFAM" id="SSF54189">
    <property type="entry name" value="Ribosomal proteins S24e, L23 and L15e"/>
    <property type="match status" value="1"/>
</dbReference>
<dbReference type="PROSITE" id="PS00050">
    <property type="entry name" value="RIBOSOMAL_L23"/>
    <property type="match status" value="1"/>
</dbReference>
<evidence type="ECO:0000255" key="1">
    <source>
        <dbReference type="HAMAP-Rule" id="MF_01369"/>
    </source>
</evidence>
<evidence type="ECO:0000305" key="2"/>
<name>RL23_BACAC</name>
<gene>
    <name evidence="1" type="primary">rplW</name>
    <name type="ordered locus">BAMEG_0128</name>
</gene>